<organism>
    <name type="scientific">Mus musculus</name>
    <name type="common">Mouse</name>
    <dbReference type="NCBI Taxonomy" id="10090"/>
    <lineage>
        <taxon>Eukaryota</taxon>
        <taxon>Metazoa</taxon>
        <taxon>Chordata</taxon>
        <taxon>Craniata</taxon>
        <taxon>Vertebrata</taxon>
        <taxon>Euteleostomi</taxon>
        <taxon>Mammalia</taxon>
        <taxon>Eutheria</taxon>
        <taxon>Euarchontoglires</taxon>
        <taxon>Glires</taxon>
        <taxon>Rodentia</taxon>
        <taxon>Myomorpha</taxon>
        <taxon>Muroidea</taxon>
        <taxon>Muridae</taxon>
        <taxon>Murinae</taxon>
        <taxon>Mus</taxon>
        <taxon>Mus</taxon>
    </lineage>
</organism>
<gene>
    <name evidence="4" type="primary">Ufc1</name>
</gene>
<sequence>MADEATRRVVSEIPVLKTNAGPRDRELWVQRLKEEYQSLIRYVENNKNSDNDWFRLESNKEGTRWFGKCWYIHDFLKYEFDIEFEIPITYPTTAPEIAVPELDGKTAKMYRGGKICLTDHFKPLWARNVPKFGLAHLMALGLGPWLAVEVPDLIQKGVIQHKEKCSQ</sequence>
<feature type="chain" id="PRO_0000082614" description="Ubiquitin-fold modifier-conjugating enzyme 1">
    <location>
        <begin position="1"/>
        <end position="167"/>
    </location>
</feature>
<feature type="active site" description="Glycyl thioester intermediate" evidence="1">
    <location>
        <position position="116"/>
    </location>
</feature>
<feature type="cross-link" description="Glycyl lysine isopeptide (Lys-Gly) (interchain with G-Cter in UFM1)" evidence="1">
    <location>
        <position position="122"/>
    </location>
</feature>
<proteinExistence type="evidence at protein level"/>
<keyword id="KW-1017">Isopeptide bond</keyword>
<keyword id="KW-1185">Reference proteome</keyword>
<keyword id="KW-0832">Ubl conjugation</keyword>
<keyword id="KW-0833">Ubl conjugation pathway</keyword>
<dbReference type="EMBL" id="AK003070">
    <property type="protein sequence ID" value="BAB22546.1"/>
    <property type="molecule type" value="mRNA"/>
</dbReference>
<dbReference type="EMBL" id="AK003897">
    <property type="protein sequence ID" value="BAB23063.1"/>
    <property type="molecule type" value="mRNA"/>
</dbReference>
<dbReference type="EMBL" id="BC021936">
    <property type="protein sequence ID" value="AAH21936.1"/>
    <property type="molecule type" value="mRNA"/>
</dbReference>
<dbReference type="CCDS" id="CCDS15488.1"/>
<dbReference type="RefSeq" id="NP_001347860.1">
    <property type="nucleotide sequence ID" value="NM_001360931.1"/>
</dbReference>
<dbReference type="RefSeq" id="NP_001347861.1">
    <property type="nucleotide sequence ID" value="NM_001360932.1"/>
</dbReference>
<dbReference type="RefSeq" id="NP_079664.1">
    <property type="nucleotide sequence ID" value="NM_025388.3"/>
</dbReference>
<dbReference type="BMRB" id="Q9CR09"/>
<dbReference type="SMR" id="Q9CR09"/>
<dbReference type="BioGRID" id="211256">
    <property type="interactions" value="11"/>
</dbReference>
<dbReference type="FunCoup" id="Q9CR09">
    <property type="interactions" value="2094"/>
</dbReference>
<dbReference type="IntAct" id="Q9CR09">
    <property type="interactions" value="2"/>
</dbReference>
<dbReference type="MINT" id="Q9CR09"/>
<dbReference type="STRING" id="10090.ENSMUSP00000078914"/>
<dbReference type="iPTMnet" id="Q9CR09"/>
<dbReference type="PhosphoSitePlus" id="Q9CR09"/>
<dbReference type="SwissPalm" id="Q9CR09"/>
<dbReference type="jPOST" id="Q9CR09"/>
<dbReference type="PaxDb" id="10090-ENSMUSP00000078914"/>
<dbReference type="PeptideAtlas" id="Q9CR09"/>
<dbReference type="ProteomicsDB" id="298124"/>
<dbReference type="Pumba" id="Q9CR09"/>
<dbReference type="Antibodypedia" id="34296">
    <property type="antibodies" value="223 antibodies from 27 providers"/>
</dbReference>
<dbReference type="DNASU" id="66155"/>
<dbReference type="Ensembl" id="ENSMUST00000080001.9">
    <property type="protein sequence ID" value="ENSMUSP00000078914.3"/>
    <property type="gene ID" value="ENSMUSG00000062963.11"/>
</dbReference>
<dbReference type="Ensembl" id="ENSMUST00000111302.4">
    <property type="protein sequence ID" value="ENSMUSP00000106933.4"/>
    <property type="gene ID" value="ENSMUSG00000062963.11"/>
</dbReference>
<dbReference type="GeneID" id="66155"/>
<dbReference type="KEGG" id="mmu:66155"/>
<dbReference type="UCSC" id="uc007dnw.1">
    <property type="organism name" value="mouse"/>
</dbReference>
<dbReference type="AGR" id="MGI:1913405"/>
<dbReference type="CTD" id="51506"/>
<dbReference type="MGI" id="MGI:1913405">
    <property type="gene designation" value="Ufc1"/>
</dbReference>
<dbReference type="VEuPathDB" id="HostDB:ENSMUSG00000062963"/>
<dbReference type="eggNOG" id="KOG3357">
    <property type="taxonomic scope" value="Eukaryota"/>
</dbReference>
<dbReference type="GeneTree" id="ENSGT00390000008196"/>
<dbReference type="HOGENOM" id="CLU_101170_0_0_1"/>
<dbReference type="InParanoid" id="Q9CR09"/>
<dbReference type="OMA" id="LWQKNVP"/>
<dbReference type="OrthoDB" id="10256182at2759"/>
<dbReference type="PhylomeDB" id="Q9CR09"/>
<dbReference type="TreeFam" id="TF313587"/>
<dbReference type="BioGRID-ORCS" id="66155">
    <property type="hits" value="16 hits in 79 CRISPR screens"/>
</dbReference>
<dbReference type="ChiTaRS" id="Ufc1">
    <property type="organism name" value="mouse"/>
</dbReference>
<dbReference type="PRO" id="PR:Q9CR09"/>
<dbReference type="Proteomes" id="UP000000589">
    <property type="component" value="Chromosome 1"/>
</dbReference>
<dbReference type="RNAct" id="Q9CR09">
    <property type="molecule type" value="protein"/>
</dbReference>
<dbReference type="Bgee" id="ENSMUSG00000062963">
    <property type="expression patterns" value="Expressed in floor plate of midbrain and 266 other cell types or tissues"/>
</dbReference>
<dbReference type="ExpressionAtlas" id="Q9CR09">
    <property type="expression patterns" value="baseline and differential"/>
</dbReference>
<dbReference type="GO" id="GO:0061657">
    <property type="term" value="F:UFM1 conjugating enzyme activity"/>
    <property type="evidence" value="ECO:0000315"/>
    <property type="project" value="UniProtKB"/>
</dbReference>
<dbReference type="GO" id="GO:0007420">
    <property type="term" value="P:brain development"/>
    <property type="evidence" value="ECO:0007669"/>
    <property type="project" value="Ensembl"/>
</dbReference>
<dbReference type="GO" id="GO:1990592">
    <property type="term" value="P:protein K69-linked ufmylation"/>
    <property type="evidence" value="ECO:0007669"/>
    <property type="project" value="Ensembl"/>
</dbReference>
<dbReference type="GO" id="GO:0071569">
    <property type="term" value="P:protein ufmylation"/>
    <property type="evidence" value="ECO:0000315"/>
    <property type="project" value="UniProtKB"/>
</dbReference>
<dbReference type="GO" id="GO:0032649">
    <property type="term" value="P:regulation of type II interferon production"/>
    <property type="evidence" value="ECO:0000315"/>
    <property type="project" value="UniProtKB"/>
</dbReference>
<dbReference type="GO" id="GO:0034976">
    <property type="term" value="P:response to endoplasmic reticulum stress"/>
    <property type="evidence" value="ECO:0000250"/>
    <property type="project" value="UniProtKB"/>
</dbReference>
<dbReference type="GO" id="GO:0061709">
    <property type="term" value="P:reticulophagy"/>
    <property type="evidence" value="ECO:0000250"/>
    <property type="project" value="UniProtKB"/>
</dbReference>
<dbReference type="CDD" id="cd11686">
    <property type="entry name" value="UBCc_UFC1"/>
    <property type="match status" value="1"/>
</dbReference>
<dbReference type="FunFam" id="3.10.110.10:FF:000042">
    <property type="entry name" value="Ubiquitin-fold modifier-conjugating enzyme 1"/>
    <property type="match status" value="1"/>
</dbReference>
<dbReference type="Gene3D" id="3.10.110.10">
    <property type="entry name" value="Ubiquitin Conjugating Enzyme"/>
    <property type="match status" value="1"/>
</dbReference>
<dbReference type="InterPro" id="IPR016135">
    <property type="entry name" value="UBQ-conjugating_enzyme/RWD"/>
</dbReference>
<dbReference type="InterPro" id="IPR014806">
    <property type="entry name" value="Ufc1"/>
</dbReference>
<dbReference type="PANTHER" id="PTHR12921">
    <property type="entry name" value="UBIQUITIN-FOLD MODIFIER-CONJUGATING ENZYME 1"/>
    <property type="match status" value="1"/>
</dbReference>
<dbReference type="PANTHER" id="PTHR12921:SF0">
    <property type="entry name" value="UBIQUITIN-FOLD MODIFIER-CONJUGATING ENZYME 1"/>
    <property type="match status" value="1"/>
</dbReference>
<dbReference type="Pfam" id="PF08694">
    <property type="entry name" value="UFC1"/>
    <property type="match status" value="1"/>
</dbReference>
<dbReference type="PIRSF" id="PIRSF008716">
    <property type="entry name" value="DUF1782"/>
    <property type="match status" value="1"/>
</dbReference>
<dbReference type="SUPFAM" id="SSF54495">
    <property type="entry name" value="UBC-like"/>
    <property type="match status" value="1"/>
</dbReference>
<name>UFC1_MOUSE</name>
<accession>Q9CR09</accession>
<reference key="1">
    <citation type="journal article" date="2005" name="Science">
        <title>The transcriptional landscape of the mammalian genome.</title>
        <authorList>
            <person name="Carninci P."/>
            <person name="Kasukawa T."/>
            <person name="Katayama S."/>
            <person name="Gough J."/>
            <person name="Frith M.C."/>
            <person name="Maeda N."/>
            <person name="Oyama R."/>
            <person name="Ravasi T."/>
            <person name="Lenhard B."/>
            <person name="Wells C."/>
            <person name="Kodzius R."/>
            <person name="Shimokawa K."/>
            <person name="Bajic V.B."/>
            <person name="Brenner S.E."/>
            <person name="Batalov S."/>
            <person name="Forrest A.R."/>
            <person name="Zavolan M."/>
            <person name="Davis M.J."/>
            <person name="Wilming L.G."/>
            <person name="Aidinis V."/>
            <person name="Allen J.E."/>
            <person name="Ambesi-Impiombato A."/>
            <person name="Apweiler R."/>
            <person name="Aturaliya R.N."/>
            <person name="Bailey T.L."/>
            <person name="Bansal M."/>
            <person name="Baxter L."/>
            <person name="Beisel K.W."/>
            <person name="Bersano T."/>
            <person name="Bono H."/>
            <person name="Chalk A.M."/>
            <person name="Chiu K.P."/>
            <person name="Choudhary V."/>
            <person name="Christoffels A."/>
            <person name="Clutterbuck D.R."/>
            <person name="Crowe M.L."/>
            <person name="Dalla E."/>
            <person name="Dalrymple B.P."/>
            <person name="de Bono B."/>
            <person name="Della Gatta G."/>
            <person name="di Bernardo D."/>
            <person name="Down T."/>
            <person name="Engstrom P."/>
            <person name="Fagiolini M."/>
            <person name="Faulkner G."/>
            <person name="Fletcher C.F."/>
            <person name="Fukushima T."/>
            <person name="Furuno M."/>
            <person name="Futaki S."/>
            <person name="Gariboldi M."/>
            <person name="Georgii-Hemming P."/>
            <person name="Gingeras T.R."/>
            <person name="Gojobori T."/>
            <person name="Green R.E."/>
            <person name="Gustincich S."/>
            <person name="Harbers M."/>
            <person name="Hayashi Y."/>
            <person name="Hensch T.K."/>
            <person name="Hirokawa N."/>
            <person name="Hill D."/>
            <person name="Huminiecki L."/>
            <person name="Iacono M."/>
            <person name="Ikeo K."/>
            <person name="Iwama A."/>
            <person name="Ishikawa T."/>
            <person name="Jakt M."/>
            <person name="Kanapin A."/>
            <person name="Katoh M."/>
            <person name="Kawasawa Y."/>
            <person name="Kelso J."/>
            <person name="Kitamura H."/>
            <person name="Kitano H."/>
            <person name="Kollias G."/>
            <person name="Krishnan S.P."/>
            <person name="Kruger A."/>
            <person name="Kummerfeld S.K."/>
            <person name="Kurochkin I.V."/>
            <person name="Lareau L.F."/>
            <person name="Lazarevic D."/>
            <person name="Lipovich L."/>
            <person name="Liu J."/>
            <person name="Liuni S."/>
            <person name="McWilliam S."/>
            <person name="Madan Babu M."/>
            <person name="Madera M."/>
            <person name="Marchionni L."/>
            <person name="Matsuda H."/>
            <person name="Matsuzawa S."/>
            <person name="Miki H."/>
            <person name="Mignone F."/>
            <person name="Miyake S."/>
            <person name="Morris K."/>
            <person name="Mottagui-Tabar S."/>
            <person name="Mulder N."/>
            <person name="Nakano N."/>
            <person name="Nakauchi H."/>
            <person name="Ng P."/>
            <person name="Nilsson R."/>
            <person name="Nishiguchi S."/>
            <person name="Nishikawa S."/>
            <person name="Nori F."/>
            <person name="Ohara O."/>
            <person name="Okazaki Y."/>
            <person name="Orlando V."/>
            <person name="Pang K.C."/>
            <person name="Pavan W.J."/>
            <person name="Pavesi G."/>
            <person name="Pesole G."/>
            <person name="Petrovsky N."/>
            <person name="Piazza S."/>
            <person name="Reed J."/>
            <person name="Reid J.F."/>
            <person name="Ring B.Z."/>
            <person name="Ringwald M."/>
            <person name="Rost B."/>
            <person name="Ruan Y."/>
            <person name="Salzberg S.L."/>
            <person name="Sandelin A."/>
            <person name="Schneider C."/>
            <person name="Schoenbach C."/>
            <person name="Sekiguchi K."/>
            <person name="Semple C.A."/>
            <person name="Seno S."/>
            <person name="Sessa L."/>
            <person name="Sheng Y."/>
            <person name="Shibata Y."/>
            <person name="Shimada H."/>
            <person name="Shimada K."/>
            <person name="Silva D."/>
            <person name="Sinclair B."/>
            <person name="Sperling S."/>
            <person name="Stupka E."/>
            <person name="Sugiura K."/>
            <person name="Sultana R."/>
            <person name="Takenaka Y."/>
            <person name="Taki K."/>
            <person name="Tammoja K."/>
            <person name="Tan S.L."/>
            <person name="Tang S."/>
            <person name="Taylor M.S."/>
            <person name="Tegner J."/>
            <person name="Teichmann S.A."/>
            <person name="Ueda H.R."/>
            <person name="van Nimwegen E."/>
            <person name="Verardo R."/>
            <person name="Wei C.L."/>
            <person name="Yagi K."/>
            <person name="Yamanishi H."/>
            <person name="Zabarovsky E."/>
            <person name="Zhu S."/>
            <person name="Zimmer A."/>
            <person name="Hide W."/>
            <person name="Bult C."/>
            <person name="Grimmond S.M."/>
            <person name="Teasdale R.D."/>
            <person name="Liu E.T."/>
            <person name="Brusic V."/>
            <person name="Quackenbush J."/>
            <person name="Wahlestedt C."/>
            <person name="Mattick J.S."/>
            <person name="Hume D.A."/>
            <person name="Kai C."/>
            <person name="Sasaki D."/>
            <person name="Tomaru Y."/>
            <person name="Fukuda S."/>
            <person name="Kanamori-Katayama M."/>
            <person name="Suzuki M."/>
            <person name="Aoki J."/>
            <person name="Arakawa T."/>
            <person name="Iida J."/>
            <person name="Imamura K."/>
            <person name="Itoh M."/>
            <person name="Kato T."/>
            <person name="Kawaji H."/>
            <person name="Kawagashira N."/>
            <person name="Kawashima T."/>
            <person name="Kojima M."/>
            <person name="Kondo S."/>
            <person name="Konno H."/>
            <person name="Nakano K."/>
            <person name="Ninomiya N."/>
            <person name="Nishio T."/>
            <person name="Okada M."/>
            <person name="Plessy C."/>
            <person name="Shibata K."/>
            <person name="Shiraki T."/>
            <person name="Suzuki S."/>
            <person name="Tagami M."/>
            <person name="Waki K."/>
            <person name="Watahiki A."/>
            <person name="Okamura-Oho Y."/>
            <person name="Suzuki H."/>
            <person name="Kawai J."/>
            <person name="Hayashizaki Y."/>
        </authorList>
    </citation>
    <scope>NUCLEOTIDE SEQUENCE [LARGE SCALE MRNA]</scope>
    <source>
        <strain>C57BL/6J</strain>
        <tissue>Embryo</tissue>
        <tissue>Spleen</tissue>
    </source>
</reference>
<reference key="2">
    <citation type="journal article" date="2004" name="Genome Res.">
        <title>The status, quality, and expansion of the NIH full-length cDNA project: the Mammalian Gene Collection (MGC).</title>
        <authorList>
            <consortium name="The MGC Project Team"/>
        </authorList>
    </citation>
    <scope>NUCLEOTIDE SEQUENCE [LARGE SCALE MRNA]</scope>
    <source>
        <strain>FVB/N</strain>
        <tissue>Liver</tissue>
    </source>
</reference>
<reference key="3">
    <citation type="journal article" date="2010" name="Cell">
        <title>A tissue-specific atlas of mouse protein phosphorylation and expression.</title>
        <authorList>
            <person name="Huttlin E.L."/>
            <person name="Jedrychowski M.P."/>
            <person name="Elias J.E."/>
            <person name="Goswami T."/>
            <person name="Rad R."/>
            <person name="Beausoleil S.A."/>
            <person name="Villen J."/>
            <person name="Haas W."/>
            <person name="Sowa M.E."/>
            <person name="Gygi S.P."/>
        </authorList>
    </citation>
    <scope>IDENTIFICATION BY MASS SPECTROMETRY [LARGE SCALE ANALYSIS]</scope>
    <source>
        <tissue>Brain</tissue>
        <tissue>Brown adipose tissue</tissue>
        <tissue>Heart</tissue>
        <tissue>Kidney</tissue>
        <tissue>Liver</tissue>
        <tissue>Lung</tissue>
        <tissue>Pancreas</tissue>
        <tissue>Spleen</tissue>
        <tissue>Testis</tissue>
    </source>
</reference>
<reference key="4">
    <citation type="journal article" date="2021" name="Proc. Natl. Acad. Sci. U.S.A.">
        <title>UFMylation inhibits the proinflammatory capacity of interferon-gamma-activated macrophages.</title>
        <authorList>
            <person name="Balce D.R."/>
            <person name="Wang Y.T."/>
            <person name="McAllaster M.R."/>
            <person name="Dunlap B.F."/>
            <person name="Orvedahl A."/>
            <person name="Hykes B.L. Jr."/>
            <person name="Droit L."/>
            <person name="Handley S.A."/>
            <person name="Wilen C.B."/>
            <person name="Doench J.G."/>
            <person name="Orchard R.C."/>
            <person name="Stallings C.L."/>
            <person name="Virgin H.W."/>
        </authorList>
    </citation>
    <scope>FUNCTION</scope>
</reference>
<protein>
    <recommendedName>
        <fullName evidence="3">Ubiquitin-fold modifier-conjugating enzyme 1</fullName>
        <shortName evidence="1">Ufm1-conjugating enzyme 1</shortName>
    </recommendedName>
</protein>
<evidence type="ECO:0000250" key="1">
    <source>
        <dbReference type="UniProtKB" id="Q9Y3C8"/>
    </source>
</evidence>
<evidence type="ECO:0000269" key="2">
    <source>
    </source>
</evidence>
<evidence type="ECO:0000305" key="3"/>
<evidence type="ECO:0000312" key="4">
    <source>
        <dbReference type="MGI" id="MGI:1913405"/>
    </source>
</evidence>
<comment type="function">
    <text evidence="1 2">E2-like enzyme which specifically catalyzes the second step in ufmylation (By similarity). Accepts the ubiquitin-like modifier UFM1 from the E1 enzyme UBA5 and forms an intermediate with UFM1 via a thioester linkage (By similarity). Ufmylation is involved in various processes, such as ribosome recycling, response to DNA damage, interferon response or reticulophagy (also called ER-phagy) (PubMed:33372156).</text>
</comment>
<comment type="subunit">
    <text evidence="1">Interacts with UBA5 (via C-terminus). Interacts with UFL1. Interacts with UFM1. Interacts with KIRREL3.</text>
</comment>
<comment type="domain">
    <text evidence="1">In absence of UBA5, the active site is solvated by water molecules thereby reducing its nucleophilic activity. A linker region of UBA5 is required to reduce the amount of water molecules in the vicinity of the active site and elevate its nucleophilic activity.</text>
</comment>
<comment type="PTM">
    <text evidence="1">Ufmylated at Lys-122. Deufmylated by UFSP1.</text>
</comment>
<comment type="similarity">
    <text evidence="3">Belongs to the ubiquitin-conjugating enzyme family. UFC1 subfamily.</text>
</comment>